<accession>Q6GJ99</accession>
<reference key="1">
    <citation type="journal article" date="2004" name="Proc. Natl. Acad. Sci. U.S.A.">
        <title>Complete genomes of two clinical Staphylococcus aureus strains: evidence for the rapid evolution of virulence and drug resistance.</title>
        <authorList>
            <person name="Holden M.T.G."/>
            <person name="Feil E.J."/>
            <person name="Lindsay J.A."/>
            <person name="Peacock S.J."/>
            <person name="Day N.P.J."/>
            <person name="Enright M.C."/>
            <person name="Foster T.J."/>
            <person name="Moore C.E."/>
            <person name="Hurst L."/>
            <person name="Atkin R."/>
            <person name="Barron A."/>
            <person name="Bason N."/>
            <person name="Bentley S.D."/>
            <person name="Chillingworth C."/>
            <person name="Chillingworth T."/>
            <person name="Churcher C."/>
            <person name="Clark L."/>
            <person name="Corton C."/>
            <person name="Cronin A."/>
            <person name="Doggett J."/>
            <person name="Dowd L."/>
            <person name="Feltwell T."/>
            <person name="Hance Z."/>
            <person name="Harris B."/>
            <person name="Hauser H."/>
            <person name="Holroyd S."/>
            <person name="Jagels K."/>
            <person name="James K.D."/>
            <person name="Lennard N."/>
            <person name="Line A."/>
            <person name="Mayes R."/>
            <person name="Moule S."/>
            <person name="Mungall K."/>
            <person name="Ormond D."/>
            <person name="Quail M.A."/>
            <person name="Rabbinowitsch E."/>
            <person name="Rutherford K.M."/>
            <person name="Sanders M."/>
            <person name="Sharp S."/>
            <person name="Simmonds M."/>
            <person name="Stevens K."/>
            <person name="Whitehead S."/>
            <person name="Barrell B.G."/>
            <person name="Spratt B.G."/>
            <person name="Parkhill J."/>
        </authorList>
    </citation>
    <scope>NUCLEOTIDE SEQUENCE [LARGE SCALE GENOMIC DNA]</scope>
    <source>
        <strain>MRSA252</strain>
    </source>
</reference>
<comment type="function">
    <text evidence="1">Catalyzes the condensation of ribulose 5-phosphate with formaldehyde to form 3-hexulose 6-phosphate.</text>
</comment>
<comment type="catalytic activity">
    <reaction>
        <text>D-ribulose 5-phosphate + formaldehyde = D-arabino-hex-3-ulose 6-phosphate</text>
        <dbReference type="Rhea" id="RHEA:25201"/>
        <dbReference type="ChEBI" id="CHEBI:16842"/>
        <dbReference type="ChEBI" id="CHEBI:58121"/>
        <dbReference type="ChEBI" id="CHEBI:58542"/>
        <dbReference type="EC" id="4.1.2.43"/>
    </reaction>
</comment>
<comment type="pathway">
    <text>One-carbon metabolism; formaldehyde assimilation via RuMP pathway; D-fructose 6-phosphate from D-ribulose 5-phosphate and formaldehyde: step 1/2.</text>
</comment>
<comment type="similarity">
    <text evidence="2">Belongs to the HPS/KGPDC family. HPS subfamily.</text>
</comment>
<keyword id="KW-0119">Carbohydrate metabolism</keyword>
<keyword id="KW-0456">Lyase</keyword>
<keyword id="KW-0554">One-carbon metabolism</keyword>
<name>HPS_STAAR</name>
<protein>
    <recommendedName>
        <fullName>3-hexulose-6-phosphate synthase</fullName>
        <shortName>HPS</shortName>
        <ecNumber>4.1.2.43</ecNumber>
    </recommendedName>
    <alternativeName>
        <fullName>D-arabino-3-hexulose-6-phosphate formaldehyde lyase</fullName>
    </alternativeName>
</protein>
<dbReference type="EC" id="4.1.2.43"/>
<dbReference type="EMBL" id="BX571856">
    <property type="protein sequence ID" value="CAG39595.1"/>
    <property type="molecule type" value="Genomic_DNA"/>
</dbReference>
<dbReference type="SMR" id="Q6GJ99"/>
<dbReference type="KEGG" id="sar:SAR0574"/>
<dbReference type="HOGENOM" id="CLU_081825_1_0_9"/>
<dbReference type="UniPathway" id="UPA00294">
    <property type="reaction ID" value="UER00434"/>
</dbReference>
<dbReference type="Proteomes" id="UP000000596">
    <property type="component" value="Chromosome"/>
</dbReference>
<dbReference type="GO" id="GO:0033982">
    <property type="term" value="F:3-dehydro-L-gulonate-6-phosphate decarboxylase activity"/>
    <property type="evidence" value="ECO:0007669"/>
    <property type="project" value="TreeGrafter"/>
</dbReference>
<dbReference type="GO" id="GO:0043801">
    <property type="term" value="F:hexulose-6-phosphate synthase activity"/>
    <property type="evidence" value="ECO:0007669"/>
    <property type="project" value="UniProtKB-EC"/>
</dbReference>
<dbReference type="GO" id="GO:0004590">
    <property type="term" value="F:orotidine-5'-phosphate decarboxylase activity"/>
    <property type="evidence" value="ECO:0007669"/>
    <property type="project" value="InterPro"/>
</dbReference>
<dbReference type="GO" id="GO:0006207">
    <property type="term" value="P:'de novo' pyrimidine nucleobase biosynthetic process"/>
    <property type="evidence" value="ECO:0007669"/>
    <property type="project" value="InterPro"/>
</dbReference>
<dbReference type="GO" id="GO:0019647">
    <property type="term" value="P:formaldehyde assimilation via ribulose monophosphate cycle"/>
    <property type="evidence" value="ECO:0007669"/>
    <property type="project" value="UniProtKB-UniPathway"/>
</dbReference>
<dbReference type="GO" id="GO:0019854">
    <property type="term" value="P:L-ascorbic acid catabolic process"/>
    <property type="evidence" value="ECO:0007669"/>
    <property type="project" value="TreeGrafter"/>
</dbReference>
<dbReference type="GO" id="GO:0006730">
    <property type="term" value="P:one-carbon metabolic process"/>
    <property type="evidence" value="ECO:0007669"/>
    <property type="project" value="UniProtKB-KW"/>
</dbReference>
<dbReference type="CDD" id="cd04726">
    <property type="entry name" value="KGPDC_HPS"/>
    <property type="match status" value="1"/>
</dbReference>
<dbReference type="FunFam" id="3.20.20.70:FF:000022">
    <property type="entry name" value="3-keto-L-gulonate-6-phosphate decarboxylase UlaD"/>
    <property type="match status" value="1"/>
</dbReference>
<dbReference type="Gene3D" id="3.20.20.70">
    <property type="entry name" value="Aldolase class I"/>
    <property type="match status" value="1"/>
</dbReference>
<dbReference type="InterPro" id="IPR017553">
    <property type="entry name" value="3-hexulose-6-phosphate_synth"/>
</dbReference>
<dbReference type="InterPro" id="IPR013785">
    <property type="entry name" value="Aldolase_TIM"/>
</dbReference>
<dbReference type="InterPro" id="IPR041710">
    <property type="entry name" value="HPS/KGPDC"/>
</dbReference>
<dbReference type="InterPro" id="IPR001754">
    <property type="entry name" value="OMPdeCOase_dom"/>
</dbReference>
<dbReference type="InterPro" id="IPR011060">
    <property type="entry name" value="RibuloseP-bd_barrel"/>
</dbReference>
<dbReference type="NCBIfam" id="TIGR03128">
    <property type="entry name" value="RuMP_HxlA"/>
    <property type="match status" value="1"/>
</dbReference>
<dbReference type="PANTHER" id="PTHR35039">
    <property type="entry name" value="3-KETO-L-GULONATE-6-PHOSPHATE DECARBOXYLASE SGBH-RELATED"/>
    <property type="match status" value="1"/>
</dbReference>
<dbReference type="PANTHER" id="PTHR35039:SF3">
    <property type="entry name" value="3-KETO-L-GULONATE-6-PHOSPHATE DECARBOXYLASE SGBH-RELATED"/>
    <property type="match status" value="1"/>
</dbReference>
<dbReference type="Pfam" id="PF00215">
    <property type="entry name" value="OMPdecase"/>
    <property type="match status" value="1"/>
</dbReference>
<dbReference type="SMART" id="SM00934">
    <property type="entry name" value="OMPdecase"/>
    <property type="match status" value="1"/>
</dbReference>
<dbReference type="SUPFAM" id="SSF51366">
    <property type="entry name" value="Ribulose-phoshate binding barrel"/>
    <property type="match status" value="1"/>
</dbReference>
<evidence type="ECO:0000250" key="1"/>
<evidence type="ECO:0000305" key="2"/>
<gene>
    <name type="ordered locus">SAR0574</name>
</gene>
<feature type="chain" id="PRO_0000269521" description="3-hexulose-6-phosphate synthase">
    <location>
        <begin position="1"/>
        <end position="210"/>
    </location>
</feature>
<proteinExistence type="inferred from homology"/>
<sequence length="210" mass="22450">MELQLAIDLLNKEDAAELANKVKDYVDIVEIGTPIIYNEGLPAVKHMADNISNVKVLADMKIMDAADYEVSQAIKFGADVITILGVAEDASIKAAIEEAHKNNKQLLVDMIAVQDLEKRAKELDEMGADYIAVHTGYDLQAEGQSPLESLRTVKSVIKNSKVAVAGGIKPDTIKEIVAESPDLVIVGGGIANADDPVEAAKQCRAAIEGK</sequence>
<organism>
    <name type="scientific">Staphylococcus aureus (strain MRSA252)</name>
    <dbReference type="NCBI Taxonomy" id="282458"/>
    <lineage>
        <taxon>Bacteria</taxon>
        <taxon>Bacillati</taxon>
        <taxon>Bacillota</taxon>
        <taxon>Bacilli</taxon>
        <taxon>Bacillales</taxon>
        <taxon>Staphylococcaceae</taxon>
        <taxon>Staphylococcus</taxon>
    </lineage>
</organism>